<reference key="1">
    <citation type="journal article" date="2005" name="Nucleic Acids Res.">
        <title>Genome dynamics and diversity of Shigella species, the etiologic agents of bacillary dysentery.</title>
        <authorList>
            <person name="Yang F."/>
            <person name="Yang J."/>
            <person name="Zhang X."/>
            <person name="Chen L."/>
            <person name="Jiang Y."/>
            <person name="Yan Y."/>
            <person name="Tang X."/>
            <person name="Wang J."/>
            <person name="Xiong Z."/>
            <person name="Dong J."/>
            <person name="Xue Y."/>
            <person name="Zhu Y."/>
            <person name="Xu X."/>
            <person name="Sun L."/>
            <person name="Chen S."/>
            <person name="Nie H."/>
            <person name="Peng J."/>
            <person name="Xu J."/>
            <person name="Wang Y."/>
            <person name="Yuan Z."/>
            <person name="Wen Y."/>
            <person name="Yao Z."/>
            <person name="Shen Y."/>
            <person name="Qiang B."/>
            <person name="Hou Y."/>
            <person name="Yu J."/>
            <person name="Jin Q."/>
        </authorList>
    </citation>
    <scope>NUCLEOTIDE SEQUENCE [LARGE SCALE GENOMIC DNA]</scope>
    <source>
        <strain>Sb227</strain>
    </source>
</reference>
<feature type="chain" id="PRO_0000273987" description="Fatty acid oxidation complex subunit alpha">
    <location>
        <begin position="1"/>
        <end position="714"/>
    </location>
</feature>
<feature type="region of interest" description="Enoyl-CoA hydratase" evidence="1">
    <location>
        <begin position="1"/>
        <end position="190"/>
    </location>
</feature>
<feature type="region of interest" description="3-hydroxyacyl-CoA dehydrogenase" evidence="1">
    <location>
        <begin position="306"/>
        <end position="714"/>
    </location>
</feature>
<feature type="site" description="Important for catalytic activity" evidence="1">
    <location>
        <position position="118"/>
    </location>
</feature>
<feature type="site" description="Important for catalytic activity" evidence="1">
    <location>
        <position position="140"/>
    </location>
</feature>
<keyword id="KW-0963">Cytoplasm</keyword>
<keyword id="KW-0276">Fatty acid metabolism</keyword>
<keyword id="KW-0413">Isomerase</keyword>
<keyword id="KW-0442">Lipid degradation</keyword>
<keyword id="KW-0443">Lipid metabolism</keyword>
<keyword id="KW-0456">Lyase</keyword>
<keyword id="KW-0511">Multifunctional enzyme</keyword>
<keyword id="KW-0520">NAD</keyword>
<keyword id="KW-0560">Oxidoreductase</keyword>
<evidence type="ECO:0000255" key="1">
    <source>
        <dbReference type="HAMAP-Rule" id="MF_01617"/>
    </source>
</evidence>
<proteinExistence type="inferred from homology"/>
<accession>Q31YB7</accession>
<organism>
    <name type="scientific">Shigella boydii serotype 4 (strain Sb227)</name>
    <dbReference type="NCBI Taxonomy" id="300268"/>
    <lineage>
        <taxon>Bacteria</taxon>
        <taxon>Pseudomonadati</taxon>
        <taxon>Pseudomonadota</taxon>
        <taxon>Gammaproteobacteria</taxon>
        <taxon>Enterobacterales</taxon>
        <taxon>Enterobacteriaceae</taxon>
        <taxon>Shigella</taxon>
    </lineage>
</organism>
<dbReference type="EC" id="4.2.1.17" evidence="1"/>
<dbReference type="EC" id="5.1.2.3" evidence="1"/>
<dbReference type="EC" id="1.1.1.35" evidence="1"/>
<dbReference type="EMBL" id="CP000036">
    <property type="protein sequence ID" value="ABB66941.1"/>
    <property type="molecule type" value="Genomic_DNA"/>
</dbReference>
<dbReference type="RefSeq" id="WP_000425002.1">
    <property type="nucleotide sequence ID" value="NC_007613.1"/>
</dbReference>
<dbReference type="SMR" id="Q31YB7"/>
<dbReference type="KEGG" id="sbo:SBO_2379"/>
<dbReference type="HOGENOM" id="CLU_009834_16_1_6"/>
<dbReference type="UniPathway" id="UPA00659"/>
<dbReference type="Proteomes" id="UP000007067">
    <property type="component" value="Chromosome"/>
</dbReference>
<dbReference type="GO" id="GO:0005737">
    <property type="term" value="C:cytoplasm"/>
    <property type="evidence" value="ECO:0007669"/>
    <property type="project" value="UniProtKB-SubCell"/>
</dbReference>
<dbReference type="GO" id="GO:0008692">
    <property type="term" value="F:3-hydroxybutyryl-CoA epimerase activity"/>
    <property type="evidence" value="ECO:0007669"/>
    <property type="project" value="UniProtKB-UniRule"/>
</dbReference>
<dbReference type="GO" id="GO:0004300">
    <property type="term" value="F:enoyl-CoA hydratase activity"/>
    <property type="evidence" value="ECO:0007669"/>
    <property type="project" value="UniProtKB-UniRule"/>
</dbReference>
<dbReference type="GO" id="GO:0016509">
    <property type="term" value="F:long-chain-3-hydroxyacyl-CoA dehydrogenase activity"/>
    <property type="evidence" value="ECO:0007669"/>
    <property type="project" value="TreeGrafter"/>
</dbReference>
<dbReference type="GO" id="GO:0070403">
    <property type="term" value="F:NAD+ binding"/>
    <property type="evidence" value="ECO:0007669"/>
    <property type="project" value="InterPro"/>
</dbReference>
<dbReference type="GO" id="GO:0006635">
    <property type="term" value="P:fatty acid beta-oxidation"/>
    <property type="evidence" value="ECO:0007669"/>
    <property type="project" value="UniProtKB-UniRule"/>
</dbReference>
<dbReference type="CDD" id="cd06558">
    <property type="entry name" value="crotonase-like"/>
    <property type="match status" value="1"/>
</dbReference>
<dbReference type="FunFam" id="1.10.1040.50:FF:000003">
    <property type="entry name" value="Fatty acid oxidation complex subunit alpha"/>
    <property type="match status" value="1"/>
</dbReference>
<dbReference type="FunFam" id="3.90.226.10:FF:000011">
    <property type="entry name" value="Fatty acid oxidation complex subunit alpha"/>
    <property type="match status" value="1"/>
</dbReference>
<dbReference type="FunFam" id="3.40.50.720:FF:000009">
    <property type="entry name" value="Fatty oxidation complex, alpha subunit"/>
    <property type="match status" value="1"/>
</dbReference>
<dbReference type="Gene3D" id="1.10.1040.50">
    <property type="match status" value="1"/>
</dbReference>
<dbReference type="Gene3D" id="3.90.226.10">
    <property type="entry name" value="2-enoyl-CoA Hydratase, Chain A, domain 1"/>
    <property type="match status" value="1"/>
</dbReference>
<dbReference type="Gene3D" id="3.40.50.720">
    <property type="entry name" value="NAD(P)-binding Rossmann-like Domain"/>
    <property type="match status" value="1"/>
</dbReference>
<dbReference type="HAMAP" id="MF_01617">
    <property type="entry name" value="FadJ"/>
    <property type="match status" value="1"/>
</dbReference>
<dbReference type="InterPro" id="IPR006180">
    <property type="entry name" value="3-OHacyl-CoA_DH_CS"/>
</dbReference>
<dbReference type="InterPro" id="IPR006176">
    <property type="entry name" value="3-OHacyl-CoA_DH_NAD-bd"/>
</dbReference>
<dbReference type="InterPro" id="IPR006108">
    <property type="entry name" value="3HC_DH_C"/>
</dbReference>
<dbReference type="InterPro" id="IPR008927">
    <property type="entry name" value="6-PGluconate_DH-like_C_sf"/>
</dbReference>
<dbReference type="InterPro" id="IPR029045">
    <property type="entry name" value="ClpP/crotonase-like_dom_sf"/>
</dbReference>
<dbReference type="InterPro" id="IPR001753">
    <property type="entry name" value="Enoyl-CoA_hydra/iso"/>
</dbReference>
<dbReference type="InterPro" id="IPR050136">
    <property type="entry name" value="FA_oxidation_alpha_subunit"/>
</dbReference>
<dbReference type="InterPro" id="IPR012802">
    <property type="entry name" value="FadJ"/>
</dbReference>
<dbReference type="InterPro" id="IPR036291">
    <property type="entry name" value="NAD(P)-bd_dom_sf"/>
</dbReference>
<dbReference type="NCBIfam" id="TIGR02440">
    <property type="entry name" value="FadJ"/>
    <property type="match status" value="1"/>
</dbReference>
<dbReference type="NCBIfam" id="NF008363">
    <property type="entry name" value="PRK11154.1"/>
    <property type="match status" value="1"/>
</dbReference>
<dbReference type="PANTHER" id="PTHR43612">
    <property type="entry name" value="TRIFUNCTIONAL ENZYME SUBUNIT ALPHA"/>
    <property type="match status" value="1"/>
</dbReference>
<dbReference type="PANTHER" id="PTHR43612:SF3">
    <property type="entry name" value="TRIFUNCTIONAL ENZYME SUBUNIT ALPHA, MITOCHONDRIAL"/>
    <property type="match status" value="1"/>
</dbReference>
<dbReference type="Pfam" id="PF00725">
    <property type="entry name" value="3HCDH"/>
    <property type="match status" value="2"/>
</dbReference>
<dbReference type="Pfam" id="PF02737">
    <property type="entry name" value="3HCDH_N"/>
    <property type="match status" value="1"/>
</dbReference>
<dbReference type="Pfam" id="PF00378">
    <property type="entry name" value="ECH_1"/>
    <property type="match status" value="1"/>
</dbReference>
<dbReference type="SUPFAM" id="SSF48179">
    <property type="entry name" value="6-phosphogluconate dehydrogenase C-terminal domain-like"/>
    <property type="match status" value="2"/>
</dbReference>
<dbReference type="SUPFAM" id="SSF52096">
    <property type="entry name" value="ClpP/crotonase"/>
    <property type="match status" value="1"/>
</dbReference>
<dbReference type="SUPFAM" id="SSF51735">
    <property type="entry name" value="NAD(P)-binding Rossmann-fold domains"/>
    <property type="match status" value="1"/>
</dbReference>
<dbReference type="PROSITE" id="PS00067">
    <property type="entry name" value="3HCDH"/>
    <property type="match status" value="1"/>
</dbReference>
<name>FADJ_SHIBS</name>
<comment type="function">
    <text evidence="1">Catalyzes the formation of a hydroxyacyl-CoA by addition of water on enoyl-CoA. Also exhibits 3-hydroxyacyl-CoA epimerase and 3-hydroxyacyl-CoA dehydrogenase activities.</text>
</comment>
<comment type="catalytic activity">
    <reaction evidence="1">
        <text>a (3S)-3-hydroxyacyl-CoA = a (2E)-enoyl-CoA + H2O</text>
        <dbReference type="Rhea" id="RHEA:16105"/>
        <dbReference type="ChEBI" id="CHEBI:15377"/>
        <dbReference type="ChEBI" id="CHEBI:57318"/>
        <dbReference type="ChEBI" id="CHEBI:58856"/>
        <dbReference type="EC" id="4.2.1.17"/>
    </reaction>
</comment>
<comment type="catalytic activity">
    <reaction evidence="1">
        <text>a 4-saturated-(3S)-3-hydroxyacyl-CoA = a (3E)-enoyl-CoA + H2O</text>
        <dbReference type="Rhea" id="RHEA:20724"/>
        <dbReference type="ChEBI" id="CHEBI:15377"/>
        <dbReference type="ChEBI" id="CHEBI:58521"/>
        <dbReference type="ChEBI" id="CHEBI:137480"/>
        <dbReference type="EC" id="4.2.1.17"/>
    </reaction>
</comment>
<comment type="catalytic activity">
    <reaction evidence="1">
        <text>a (3S)-3-hydroxyacyl-CoA + NAD(+) = a 3-oxoacyl-CoA + NADH + H(+)</text>
        <dbReference type="Rhea" id="RHEA:22432"/>
        <dbReference type="ChEBI" id="CHEBI:15378"/>
        <dbReference type="ChEBI" id="CHEBI:57318"/>
        <dbReference type="ChEBI" id="CHEBI:57540"/>
        <dbReference type="ChEBI" id="CHEBI:57945"/>
        <dbReference type="ChEBI" id="CHEBI:90726"/>
        <dbReference type="EC" id="1.1.1.35"/>
    </reaction>
</comment>
<comment type="catalytic activity">
    <reaction evidence="1">
        <text>(3S)-3-hydroxybutanoyl-CoA = (3R)-3-hydroxybutanoyl-CoA</text>
        <dbReference type="Rhea" id="RHEA:21760"/>
        <dbReference type="ChEBI" id="CHEBI:57315"/>
        <dbReference type="ChEBI" id="CHEBI:57316"/>
        <dbReference type="EC" id="5.1.2.3"/>
    </reaction>
</comment>
<comment type="pathway">
    <text evidence="1">Lipid metabolism; fatty acid beta-oxidation.</text>
</comment>
<comment type="subunit">
    <text evidence="1">Heterotetramer of two alpha chains (FadJ) and two beta chains (FadI).</text>
</comment>
<comment type="subcellular location">
    <subcellularLocation>
        <location evidence="1">Cytoplasm</location>
    </subcellularLocation>
</comment>
<comment type="similarity">
    <text evidence="1">In the N-terminal section; belongs to the enoyl-CoA hydratase/isomerase family.</text>
</comment>
<comment type="similarity">
    <text evidence="1">In the central section; belongs to the 3-hydroxyacyl-CoA dehydrogenase family.</text>
</comment>
<gene>
    <name evidence="1" type="primary">fadJ</name>
    <name type="ordered locus">SBO_2379</name>
</gene>
<protein>
    <recommendedName>
        <fullName evidence="1">Fatty acid oxidation complex subunit alpha</fullName>
    </recommendedName>
    <domain>
        <recommendedName>
            <fullName evidence="1">Enoyl-CoA hydratase/3-hydroxybutyryl-CoA epimerase</fullName>
            <ecNumber evidence="1">4.2.1.17</ecNumber>
            <ecNumber evidence="1">5.1.2.3</ecNumber>
        </recommendedName>
    </domain>
    <domain>
        <recommendedName>
            <fullName evidence="1">3-hydroxyacyl-CoA dehydrogenase</fullName>
            <ecNumber evidence="1">1.1.1.35</ecNumber>
        </recommendedName>
    </domain>
</protein>
<sequence>MEMASAFTLNVRLDNIAIITIDVPDEKMNTLKAEFASQVRAIIKQLRENKELRGVVFISAKPDNFIAGADINMIGNCKTVQEAEALARQGQQLMAEIHALPIPVIAAIHGACLGGGLELALACHGRVCTDDPKTVLGLPEVQLGLLPGSGGTQRLPRLIGVSTTLEMILTGKQLRAKQALKLGLVDDVVPHSILLEVAVELAKKDRPSSRPLPVRERILAGPLGRALLFKMVGKKTEHKTQGNYPATERILEVVETGLAQGTSSGYDAEARAFGELAMTPQSQALRSIFFASTDVKKDPGSDAPPAPLNSVGILGGGLMGGGIAYVTACKAGLPVRIKDINPQGINHALKYSWDQLEGKVRRRHLKASERDKQLALISGTTDYRGFAHRDLIIEAVFENLELKQQMVAEVEQNCAAHTIFASNTSSLPIGDIAAHATRPEQVIGLHFFSPVEKMPLVEIIPHAGTSAQTIATTVKLAKKQGKTPIVVRDKAGFYVNRILAPYINEAIRMLTKGERVEHIDAALVKFGFPVGPIQLLDEVGIDTGTKIIPVLEAAYGERFSAPANVVSSILNDDRKGRKNGRGFYLYGQKGRKSKKQVDPAIYPLIGAQGQGRLSAPQVSERCVMLMLNEAVRCVDEQVIRSVRDGDIGAVFGIGFPPFLGGPFRYIDSLGAGEVVAIMQRLATQYGSRFTPCERLVEMGARGESFWKTTATDLQ</sequence>